<dbReference type="EMBL" id="CP000554">
    <property type="protein sequence ID" value="ABM79059.1"/>
    <property type="molecule type" value="Genomic_DNA"/>
</dbReference>
<dbReference type="RefSeq" id="WP_011826925.1">
    <property type="nucleotide sequence ID" value="NC_008820.1"/>
</dbReference>
<dbReference type="SMR" id="A2CC49"/>
<dbReference type="STRING" id="59922.P9303_23241"/>
<dbReference type="KEGG" id="pmf:P9303_23241"/>
<dbReference type="HOGENOM" id="CLU_103849_1_2_3"/>
<dbReference type="BioCyc" id="PMAR59922:G1G80-2040-MONOMER"/>
<dbReference type="Proteomes" id="UP000002274">
    <property type="component" value="Chromosome"/>
</dbReference>
<dbReference type="GO" id="GO:0005829">
    <property type="term" value="C:cytosol"/>
    <property type="evidence" value="ECO:0007669"/>
    <property type="project" value="TreeGrafter"/>
</dbReference>
<dbReference type="GO" id="GO:0015935">
    <property type="term" value="C:small ribosomal subunit"/>
    <property type="evidence" value="ECO:0007669"/>
    <property type="project" value="TreeGrafter"/>
</dbReference>
<dbReference type="GO" id="GO:0019843">
    <property type="term" value="F:rRNA binding"/>
    <property type="evidence" value="ECO:0007669"/>
    <property type="project" value="UniProtKB-UniRule"/>
</dbReference>
<dbReference type="GO" id="GO:0003735">
    <property type="term" value="F:structural constituent of ribosome"/>
    <property type="evidence" value="ECO:0007669"/>
    <property type="project" value="InterPro"/>
</dbReference>
<dbReference type="GO" id="GO:0000049">
    <property type="term" value="F:tRNA binding"/>
    <property type="evidence" value="ECO:0007669"/>
    <property type="project" value="UniProtKB-UniRule"/>
</dbReference>
<dbReference type="GO" id="GO:0006412">
    <property type="term" value="P:translation"/>
    <property type="evidence" value="ECO:0007669"/>
    <property type="project" value="UniProtKB-UniRule"/>
</dbReference>
<dbReference type="FunFam" id="1.10.8.50:FF:000001">
    <property type="entry name" value="30S ribosomal protein S13"/>
    <property type="match status" value="1"/>
</dbReference>
<dbReference type="Gene3D" id="1.10.8.50">
    <property type="match status" value="1"/>
</dbReference>
<dbReference type="Gene3D" id="4.10.910.10">
    <property type="entry name" value="30s ribosomal protein s13, domain 2"/>
    <property type="match status" value="1"/>
</dbReference>
<dbReference type="HAMAP" id="MF_01315">
    <property type="entry name" value="Ribosomal_uS13"/>
    <property type="match status" value="1"/>
</dbReference>
<dbReference type="InterPro" id="IPR027437">
    <property type="entry name" value="Rbsml_uS13_C"/>
</dbReference>
<dbReference type="InterPro" id="IPR001892">
    <property type="entry name" value="Ribosomal_uS13"/>
</dbReference>
<dbReference type="InterPro" id="IPR010979">
    <property type="entry name" value="Ribosomal_uS13-like_H2TH"/>
</dbReference>
<dbReference type="InterPro" id="IPR019980">
    <property type="entry name" value="Ribosomal_uS13_bac-type"/>
</dbReference>
<dbReference type="InterPro" id="IPR018269">
    <property type="entry name" value="Ribosomal_uS13_CS"/>
</dbReference>
<dbReference type="NCBIfam" id="TIGR03631">
    <property type="entry name" value="uS13_bact"/>
    <property type="match status" value="1"/>
</dbReference>
<dbReference type="PANTHER" id="PTHR10871">
    <property type="entry name" value="30S RIBOSOMAL PROTEIN S13/40S RIBOSOMAL PROTEIN S18"/>
    <property type="match status" value="1"/>
</dbReference>
<dbReference type="PANTHER" id="PTHR10871:SF1">
    <property type="entry name" value="SMALL RIBOSOMAL SUBUNIT PROTEIN US13M"/>
    <property type="match status" value="1"/>
</dbReference>
<dbReference type="Pfam" id="PF00416">
    <property type="entry name" value="Ribosomal_S13"/>
    <property type="match status" value="1"/>
</dbReference>
<dbReference type="PIRSF" id="PIRSF002134">
    <property type="entry name" value="Ribosomal_S13"/>
    <property type="match status" value="1"/>
</dbReference>
<dbReference type="SUPFAM" id="SSF46946">
    <property type="entry name" value="S13-like H2TH domain"/>
    <property type="match status" value="1"/>
</dbReference>
<dbReference type="PROSITE" id="PS00646">
    <property type="entry name" value="RIBOSOMAL_S13_1"/>
    <property type="match status" value="1"/>
</dbReference>
<dbReference type="PROSITE" id="PS50159">
    <property type="entry name" value="RIBOSOMAL_S13_2"/>
    <property type="match status" value="1"/>
</dbReference>
<proteinExistence type="inferred from homology"/>
<feature type="chain" id="PRO_0000306676" description="Small ribosomal subunit protein uS13">
    <location>
        <begin position="1"/>
        <end position="121"/>
    </location>
</feature>
<feature type="region of interest" description="Disordered" evidence="2">
    <location>
        <begin position="97"/>
        <end position="121"/>
    </location>
</feature>
<feature type="compositionally biased region" description="Basic residues" evidence="2">
    <location>
        <begin position="100"/>
        <end position="121"/>
    </location>
</feature>
<protein>
    <recommendedName>
        <fullName evidence="1">Small ribosomal subunit protein uS13</fullName>
    </recommendedName>
    <alternativeName>
        <fullName evidence="3">30S ribosomal protein S13</fullName>
    </alternativeName>
</protein>
<name>RS13_PROM3</name>
<keyword id="KW-0687">Ribonucleoprotein</keyword>
<keyword id="KW-0689">Ribosomal protein</keyword>
<keyword id="KW-0694">RNA-binding</keyword>
<keyword id="KW-0699">rRNA-binding</keyword>
<keyword id="KW-0820">tRNA-binding</keyword>
<sequence>MARIAGVDIPRDKRVEVALTYIYGIGLTRAKTILTKSGVNPDIRVKDLEDGDVQKLRTALEAFTIEGDLRRQEGMALKRLQDIGCLRGRRHRMSLPVRGQRTRTNARTRRGARKTVAGKKK</sequence>
<accession>A2CC49</accession>
<evidence type="ECO:0000255" key="1">
    <source>
        <dbReference type="HAMAP-Rule" id="MF_01315"/>
    </source>
</evidence>
<evidence type="ECO:0000256" key="2">
    <source>
        <dbReference type="SAM" id="MobiDB-lite"/>
    </source>
</evidence>
<evidence type="ECO:0000305" key="3"/>
<gene>
    <name evidence="1" type="primary">rpsM</name>
    <name evidence="1" type="synonym">rps13</name>
    <name type="ordered locus">P9303_23241</name>
</gene>
<organism>
    <name type="scientific">Prochlorococcus marinus (strain MIT 9303)</name>
    <dbReference type="NCBI Taxonomy" id="59922"/>
    <lineage>
        <taxon>Bacteria</taxon>
        <taxon>Bacillati</taxon>
        <taxon>Cyanobacteriota</taxon>
        <taxon>Cyanophyceae</taxon>
        <taxon>Synechococcales</taxon>
        <taxon>Prochlorococcaceae</taxon>
        <taxon>Prochlorococcus</taxon>
    </lineage>
</organism>
<reference key="1">
    <citation type="journal article" date="2007" name="PLoS Genet.">
        <title>Patterns and implications of gene gain and loss in the evolution of Prochlorococcus.</title>
        <authorList>
            <person name="Kettler G.C."/>
            <person name="Martiny A.C."/>
            <person name="Huang K."/>
            <person name="Zucker J."/>
            <person name="Coleman M.L."/>
            <person name="Rodrigue S."/>
            <person name="Chen F."/>
            <person name="Lapidus A."/>
            <person name="Ferriera S."/>
            <person name="Johnson J."/>
            <person name="Steglich C."/>
            <person name="Church G.M."/>
            <person name="Richardson P."/>
            <person name="Chisholm S.W."/>
        </authorList>
    </citation>
    <scope>NUCLEOTIDE SEQUENCE [LARGE SCALE GENOMIC DNA]</scope>
    <source>
        <strain>MIT 9303</strain>
    </source>
</reference>
<comment type="function">
    <text evidence="1">Located at the top of the head of the 30S subunit, it contacts several helices of the 16S rRNA. In the 70S ribosome it contacts the 23S rRNA (bridge B1a) and protein L5 of the 50S subunit (bridge B1b), connecting the 2 subunits; these bridges are implicated in subunit movement. Contacts the tRNAs in the A and P-sites.</text>
</comment>
<comment type="subunit">
    <text evidence="1">Part of the 30S ribosomal subunit. Forms a loose heterodimer with protein S19. Forms two bridges to the 50S subunit in the 70S ribosome.</text>
</comment>
<comment type="similarity">
    <text evidence="1">Belongs to the universal ribosomal protein uS13 family.</text>
</comment>